<comment type="function">
    <text evidence="1">Allows the formation of correctly charged Gln-tRNA(Gln) through the transamidation of misacylated Glu-tRNA(Gln) in organisms which lack glutaminyl-tRNA synthetase. The reaction takes place in the presence of glutamine and ATP through an activated gamma-phospho-Glu-tRNA(Gln).</text>
</comment>
<comment type="catalytic activity">
    <reaction evidence="1">
        <text>L-glutamyl-tRNA(Gln) + L-glutamine + ATP + H2O = L-glutaminyl-tRNA(Gln) + L-glutamate + ADP + phosphate + H(+)</text>
        <dbReference type="Rhea" id="RHEA:17521"/>
        <dbReference type="Rhea" id="RHEA-COMP:9681"/>
        <dbReference type="Rhea" id="RHEA-COMP:9684"/>
        <dbReference type="ChEBI" id="CHEBI:15377"/>
        <dbReference type="ChEBI" id="CHEBI:15378"/>
        <dbReference type="ChEBI" id="CHEBI:29985"/>
        <dbReference type="ChEBI" id="CHEBI:30616"/>
        <dbReference type="ChEBI" id="CHEBI:43474"/>
        <dbReference type="ChEBI" id="CHEBI:58359"/>
        <dbReference type="ChEBI" id="CHEBI:78520"/>
        <dbReference type="ChEBI" id="CHEBI:78521"/>
        <dbReference type="ChEBI" id="CHEBI:456216"/>
        <dbReference type="EC" id="6.3.5.7"/>
    </reaction>
</comment>
<comment type="subunit">
    <text evidence="1">Heterotrimer of A, B and C subunits.</text>
</comment>
<comment type="similarity">
    <text evidence="1">Belongs to the amidase family. GatA subfamily.</text>
</comment>
<reference key="1">
    <citation type="submission" date="2007-11" db="EMBL/GenBank/DDBJ databases">
        <title>Complete genome sequence of Clostridium phytofermentans ISDg.</title>
        <authorList>
            <person name="Leschine S.B."/>
            <person name="Warnick T.A."/>
            <person name="Blanchard J.L."/>
            <person name="Schnell D.J."/>
            <person name="Petit E.L."/>
            <person name="LaTouf W.G."/>
            <person name="Copeland A."/>
            <person name="Lucas S."/>
            <person name="Lapidus A."/>
            <person name="Barry K."/>
            <person name="Glavina del Rio T."/>
            <person name="Dalin E."/>
            <person name="Tice H."/>
            <person name="Pitluck S."/>
            <person name="Kiss H."/>
            <person name="Brettin T."/>
            <person name="Bruce D."/>
            <person name="Detter J.C."/>
            <person name="Han C."/>
            <person name="Kuske C."/>
            <person name="Schmutz J."/>
            <person name="Larimer F."/>
            <person name="Land M."/>
            <person name="Hauser L."/>
            <person name="Kyrpides N."/>
            <person name="Kim E.A."/>
            <person name="Richardson P."/>
        </authorList>
    </citation>
    <scope>NUCLEOTIDE SEQUENCE [LARGE SCALE GENOMIC DNA]</scope>
    <source>
        <strain>ATCC 700394 / DSM 18823 / ISDg</strain>
    </source>
</reference>
<name>GATA_LACP7</name>
<gene>
    <name evidence="1" type="primary">gatA</name>
    <name type="ordered locus">Cphy_0638</name>
</gene>
<organism>
    <name type="scientific">Lachnoclostridium phytofermentans (strain ATCC 700394 / DSM 18823 / ISDg)</name>
    <name type="common">Clostridium phytofermentans</name>
    <dbReference type="NCBI Taxonomy" id="357809"/>
    <lineage>
        <taxon>Bacteria</taxon>
        <taxon>Bacillati</taxon>
        <taxon>Bacillota</taxon>
        <taxon>Clostridia</taxon>
        <taxon>Lachnospirales</taxon>
        <taxon>Lachnospiraceae</taxon>
    </lineage>
</organism>
<evidence type="ECO:0000255" key="1">
    <source>
        <dbReference type="HAMAP-Rule" id="MF_00120"/>
    </source>
</evidence>
<sequence>MEITKLTAIELSKKIKQKELSVEEAVKATFSAIKKREPYYHSYITVNEEEALEQASKIQIAIEAGKFADSPLAGVPIAIKDNICVKGMRTTCASKILEDFIPPYNASVIERLKDAGAIILGKTNMDEFAMGSTTETSYFGATKNPWNIECIPGGSSGGSAAAVAAEEAFIALGTDTGGSIRQPSAFCGVTGIKPTYGTVSRYGLVAYASSLDQIGPIARSVSDCAATLQVISGADDKDSTCVKAASYDYVSALRSDVRGLRIGIPRGYFSEGLDAEVKKHVLEAAAFFKEQGAIVEEFDLEAVDYATPAYYVIASAEASSNLSRYDGVKYGYRTADFDGLQELYKKTRSEGFGEEVKRRMMIGSFVLSSGYYDAYYNKALKVRALIKQSFDRAFERFDIILGPTTPAAARKLGQSLFNPVKMFLGDIYTVSVNLAGLPAISLPCGLSEESSSDKSAGMPIGLQLIGKPFGEKDIIRAAYTLEQTKIYQRPKLID</sequence>
<protein>
    <recommendedName>
        <fullName evidence="1">Glutamyl-tRNA(Gln) amidotransferase subunit A</fullName>
        <shortName evidence="1">Glu-ADT subunit A</shortName>
        <ecNumber evidence="1">6.3.5.7</ecNumber>
    </recommendedName>
</protein>
<accession>A9KJ26</accession>
<proteinExistence type="inferred from homology"/>
<keyword id="KW-0067">ATP-binding</keyword>
<keyword id="KW-0436">Ligase</keyword>
<keyword id="KW-0547">Nucleotide-binding</keyword>
<keyword id="KW-0648">Protein biosynthesis</keyword>
<keyword id="KW-1185">Reference proteome</keyword>
<feature type="chain" id="PRO_1000076125" description="Glutamyl-tRNA(Gln) amidotransferase subunit A">
    <location>
        <begin position="1"/>
        <end position="494"/>
    </location>
</feature>
<feature type="active site" description="Charge relay system" evidence="1">
    <location>
        <position position="80"/>
    </location>
</feature>
<feature type="active site" description="Charge relay system" evidence="1">
    <location>
        <position position="155"/>
    </location>
</feature>
<feature type="active site" description="Acyl-ester intermediate" evidence="1">
    <location>
        <position position="179"/>
    </location>
</feature>
<dbReference type="EC" id="6.3.5.7" evidence="1"/>
<dbReference type="EMBL" id="CP000885">
    <property type="protein sequence ID" value="ABX41025.1"/>
    <property type="molecule type" value="Genomic_DNA"/>
</dbReference>
<dbReference type="RefSeq" id="WP_012198669.1">
    <property type="nucleotide sequence ID" value="NC_010001.1"/>
</dbReference>
<dbReference type="SMR" id="A9KJ26"/>
<dbReference type="STRING" id="357809.Cphy_0638"/>
<dbReference type="KEGG" id="cpy:Cphy_0638"/>
<dbReference type="eggNOG" id="COG0154">
    <property type="taxonomic scope" value="Bacteria"/>
</dbReference>
<dbReference type="HOGENOM" id="CLU_009600_0_3_9"/>
<dbReference type="OrthoDB" id="9811471at2"/>
<dbReference type="Proteomes" id="UP000000370">
    <property type="component" value="Chromosome"/>
</dbReference>
<dbReference type="GO" id="GO:0030956">
    <property type="term" value="C:glutamyl-tRNA(Gln) amidotransferase complex"/>
    <property type="evidence" value="ECO:0007669"/>
    <property type="project" value="InterPro"/>
</dbReference>
<dbReference type="GO" id="GO:0005524">
    <property type="term" value="F:ATP binding"/>
    <property type="evidence" value="ECO:0007669"/>
    <property type="project" value="UniProtKB-KW"/>
</dbReference>
<dbReference type="GO" id="GO:0050567">
    <property type="term" value="F:glutaminyl-tRNA synthase (glutamine-hydrolyzing) activity"/>
    <property type="evidence" value="ECO:0007669"/>
    <property type="project" value="UniProtKB-UniRule"/>
</dbReference>
<dbReference type="GO" id="GO:0006412">
    <property type="term" value="P:translation"/>
    <property type="evidence" value="ECO:0007669"/>
    <property type="project" value="UniProtKB-UniRule"/>
</dbReference>
<dbReference type="Gene3D" id="3.90.1300.10">
    <property type="entry name" value="Amidase signature (AS) domain"/>
    <property type="match status" value="1"/>
</dbReference>
<dbReference type="HAMAP" id="MF_00120">
    <property type="entry name" value="GatA"/>
    <property type="match status" value="1"/>
</dbReference>
<dbReference type="InterPro" id="IPR000120">
    <property type="entry name" value="Amidase"/>
</dbReference>
<dbReference type="InterPro" id="IPR020556">
    <property type="entry name" value="Amidase_CS"/>
</dbReference>
<dbReference type="InterPro" id="IPR023631">
    <property type="entry name" value="Amidase_dom"/>
</dbReference>
<dbReference type="InterPro" id="IPR036928">
    <property type="entry name" value="AS_sf"/>
</dbReference>
<dbReference type="InterPro" id="IPR004412">
    <property type="entry name" value="GatA"/>
</dbReference>
<dbReference type="NCBIfam" id="TIGR00132">
    <property type="entry name" value="gatA"/>
    <property type="match status" value="1"/>
</dbReference>
<dbReference type="PANTHER" id="PTHR11895:SF151">
    <property type="entry name" value="GLUTAMYL-TRNA(GLN) AMIDOTRANSFERASE SUBUNIT A"/>
    <property type="match status" value="1"/>
</dbReference>
<dbReference type="PANTHER" id="PTHR11895">
    <property type="entry name" value="TRANSAMIDASE"/>
    <property type="match status" value="1"/>
</dbReference>
<dbReference type="Pfam" id="PF01425">
    <property type="entry name" value="Amidase"/>
    <property type="match status" value="1"/>
</dbReference>
<dbReference type="PIRSF" id="PIRSF001221">
    <property type="entry name" value="Amidase_fungi"/>
    <property type="match status" value="1"/>
</dbReference>
<dbReference type="SUPFAM" id="SSF75304">
    <property type="entry name" value="Amidase signature (AS) enzymes"/>
    <property type="match status" value="1"/>
</dbReference>
<dbReference type="PROSITE" id="PS00571">
    <property type="entry name" value="AMIDASES"/>
    <property type="match status" value="1"/>
</dbReference>